<comment type="function">
    <text evidence="1">Required for the activation of chitin synthase III (CHS3) activity during the sporulation process.</text>
</comment>
<comment type="subcellular location">
    <subcellularLocation>
        <location>Cytoplasm</location>
    </subcellularLocation>
    <subcellularLocation>
        <location evidence="1">Cytoplasmic granule membrane</location>
        <topology evidence="1">Peripheral membrane protein</topology>
    </subcellularLocation>
</comment>
<comment type="induction">
    <text evidence="1">During sporulation and at high pH.</text>
</comment>
<comment type="similarity">
    <text evidence="3">Belongs to the SKT5 family.</text>
</comment>
<sequence>MSMTICSNTPGAYPEIGAYNEVDKQLESSGFSSDSSLILNKPEVRQYWSSVSSHISRSGDVFTNDKEKISSSIGEDAMDIDASPSLIEKYNSFPTRKILPEQDEFENDVEDDASSSLKEKSQGSCEIEIASEISSEILNGTSADGNSEFHDFAEPPPSQNESVALSFSQSNDLDFLNNPSGSGSSNDINRSTSSISLPRHVSLDFNVYNSLCLTNEVTASESHNVAKFHLGKENKKSLLPRWKTIEMYGEVVKKTQDIYSNFQYAQYILRVGLDTEKLHELVKELEDESNSFTVDSLKEYLVNDAKVILKKLSAVGYPDAQYLLGDAYSSGVFGKIKNRRAFLLFSAAAKRLHIESVYRTAICYECGLGVTRNAPKAVNFLTFAATKNHPAAMYKLGVYSYHGLMGLPDDILTKMDGYRWLRRATSMASSFVCGAPFELANIYMTGYKDLIISDPDYAMALYEKAAALGHTESARILEDARRSGGFVSRGHPPSAQKYHKTSHEAVAAKKLI</sequence>
<feature type="chain" id="PRO_0000324992" description="Protein SHC1">
    <location>
        <begin position="1"/>
        <end position="512"/>
    </location>
</feature>
<feature type="repeat" description="Sel1-like 1">
    <location>
        <begin position="318"/>
        <end position="353"/>
    </location>
</feature>
<feature type="repeat" description="Sel1-like 2">
    <location>
        <begin position="354"/>
        <end position="389"/>
    </location>
</feature>
<feature type="repeat" description="Sel1-like 3">
    <location>
        <begin position="390"/>
        <end position="429"/>
    </location>
</feature>
<feature type="repeat" description="Sel1-like 4">
    <location>
        <begin position="433"/>
        <end position="470"/>
    </location>
</feature>
<feature type="region of interest" description="Disordered" evidence="2">
    <location>
        <begin position="101"/>
        <end position="122"/>
    </location>
</feature>
<feature type="region of interest" description="Disordered" evidence="2">
    <location>
        <begin position="144"/>
        <end position="165"/>
    </location>
</feature>
<feature type="compositionally biased region" description="Acidic residues" evidence="2">
    <location>
        <begin position="101"/>
        <end position="113"/>
    </location>
</feature>
<gene>
    <name type="primary">SHC1</name>
    <name type="ORF">SCY_1600</name>
</gene>
<name>SHC1_YEAS7</name>
<keyword id="KW-0961">Cell wall biogenesis/degradation</keyword>
<keyword id="KW-0963">Cytoplasm</keyword>
<keyword id="KW-0472">Membrane</keyword>
<keyword id="KW-0677">Repeat</keyword>
<keyword id="KW-0749">Sporulation</keyword>
<reference key="1">
    <citation type="journal article" date="2007" name="Proc. Natl. Acad. Sci. U.S.A.">
        <title>Genome sequencing and comparative analysis of Saccharomyces cerevisiae strain YJM789.</title>
        <authorList>
            <person name="Wei W."/>
            <person name="McCusker J.H."/>
            <person name="Hyman R.W."/>
            <person name="Jones T."/>
            <person name="Ning Y."/>
            <person name="Cao Z."/>
            <person name="Gu Z."/>
            <person name="Bruno D."/>
            <person name="Miranda M."/>
            <person name="Nguyen M."/>
            <person name="Wilhelmy J."/>
            <person name="Komp C."/>
            <person name="Tamse R."/>
            <person name="Wang X."/>
            <person name="Jia P."/>
            <person name="Luedi P."/>
            <person name="Oefner P.J."/>
            <person name="David L."/>
            <person name="Dietrich F.S."/>
            <person name="Li Y."/>
            <person name="Davis R.W."/>
            <person name="Steinmetz L.M."/>
        </authorList>
    </citation>
    <scope>NUCLEOTIDE SEQUENCE [LARGE SCALE GENOMIC DNA]</scope>
    <source>
        <strain>YJM789</strain>
    </source>
</reference>
<proteinExistence type="inferred from homology"/>
<dbReference type="EMBL" id="AAFW02000048">
    <property type="protein sequence ID" value="EDN63073.1"/>
    <property type="molecule type" value="Genomic_DNA"/>
</dbReference>
<dbReference type="SMR" id="A6ZR53"/>
<dbReference type="HOGENOM" id="CLU_532327_0_0_1"/>
<dbReference type="Proteomes" id="UP000007060">
    <property type="component" value="Unassembled WGS sequence"/>
</dbReference>
<dbReference type="GO" id="GO:0005737">
    <property type="term" value="C:cytoplasm"/>
    <property type="evidence" value="ECO:0007669"/>
    <property type="project" value="UniProtKB-SubCell"/>
</dbReference>
<dbReference type="GO" id="GO:0016020">
    <property type="term" value="C:membrane"/>
    <property type="evidence" value="ECO:0007669"/>
    <property type="project" value="UniProtKB-KW"/>
</dbReference>
<dbReference type="GO" id="GO:0071555">
    <property type="term" value="P:cell wall organization"/>
    <property type="evidence" value="ECO:0007669"/>
    <property type="project" value="UniProtKB-KW"/>
</dbReference>
<dbReference type="GO" id="GO:0030435">
    <property type="term" value="P:sporulation resulting in formation of a cellular spore"/>
    <property type="evidence" value="ECO:0007669"/>
    <property type="project" value="UniProtKB-KW"/>
</dbReference>
<dbReference type="Gene3D" id="1.25.40.10">
    <property type="entry name" value="Tetratricopeptide repeat domain"/>
    <property type="match status" value="1"/>
</dbReference>
<dbReference type="InterPro" id="IPR051726">
    <property type="entry name" value="Chitin_Synth_Reg"/>
</dbReference>
<dbReference type="InterPro" id="IPR006597">
    <property type="entry name" value="Sel1-like"/>
</dbReference>
<dbReference type="InterPro" id="IPR011990">
    <property type="entry name" value="TPR-like_helical_dom_sf"/>
</dbReference>
<dbReference type="PANTHER" id="PTHR46430:SF1">
    <property type="entry name" value="CHITIN SYNTHASE REGULATOR SKT5-RELATED"/>
    <property type="match status" value="1"/>
</dbReference>
<dbReference type="PANTHER" id="PTHR46430">
    <property type="entry name" value="PROTEIN SKT5-RELATED"/>
    <property type="match status" value="1"/>
</dbReference>
<dbReference type="Pfam" id="PF08238">
    <property type="entry name" value="Sel1"/>
    <property type="match status" value="4"/>
</dbReference>
<dbReference type="SMART" id="SM00671">
    <property type="entry name" value="SEL1"/>
    <property type="match status" value="4"/>
</dbReference>
<dbReference type="SUPFAM" id="SSF81901">
    <property type="entry name" value="HCP-like"/>
    <property type="match status" value="1"/>
</dbReference>
<evidence type="ECO:0000250" key="1"/>
<evidence type="ECO:0000256" key="2">
    <source>
        <dbReference type="SAM" id="MobiDB-lite"/>
    </source>
</evidence>
<evidence type="ECO:0000305" key="3"/>
<protein>
    <recommendedName>
        <fullName>Protein SHC1</fullName>
    </recommendedName>
    <alternativeName>
        <fullName>Sporulation-specific homolog of CSD4</fullName>
    </alternativeName>
</protein>
<accession>A6ZR53</accession>
<organism>
    <name type="scientific">Saccharomyces cerevisiae (strain YJM789)</name>
    <name type="common">Baker's yeast</name>
    <dbReference type="NCBI Taxonomy" id="307796"/>
    <lineage>
        <taxon>Eukaryota</taxon>
        <taxon>Fungi</taxon>
        <taxon>Dikarya</taxon>
        <taxon>Ascomycota</taxon>
        <taxon>Saccharomycotina</taxon>
        <taxon>Saccharomycetes</taxon>
        <taxon>Saccharomycetales</taxon>
        <taxon>Saccharomycetaceae</taxon>
        <taxon>Saccharomyces</taxon>
    </lineage>
</organism>